<dbReference type="EMBL" id="CP000025">
    <property type="protein sequence ID" value="AAW36192.1"/>
    <property type="molecule type" value="Genomic_DNA"/>
</dbReference>
<dbReference type="RefSeq" id="WP_002851332.1">
    <property type="nucleotide sequence ID" value="NC_003912.7"/>
</dbReference>
<dbReference type="SMR" id="Q5HSJ5"/>
<dbReference type="KEGG" id="cjr:CJE1768"/>
<dbReference type="HOGENOM" id="CLU_074407_2_0_7"/>
<dbReference type="GO" id="GO:0022625">
    <property type="term" value="C:cytosolic large ribosomal subunit"/>
    <property type="evidence" value="ECO:0007669"/>
    <property type="project" value="TreeGrafter"/>
</dbReference>
<dbReference type="GO" id="GO:0003735">
    <property type="term" value="F:structural constituent of ribosome"/>
    <property type="evidence" value="ECO:0007669"/>
    <property type="project" value="InterPro"/>
</dbReference>
<dbReference type="GO" id="GO:0006412">
    <property type="term" value="P:translation"/>
    <property type="evidence" value="ECO:0007669"/>
    <property type="project" value="UniProtKB-UniRule"/>
</dbReference>
<dbReference type="FunFam" id="3.90.1030.10:FF:000003">
    <property type="entry name" value="50S ribosomal protein L17"/>
    <property type="match status" value="1"/>
</dbReference>
<dbReference type="Gene3D" id="3.90.1030.10">
    <property type="entry name" value="Ribosomal protein L17"/>
    <property type="match status" value="1"/>
</dbReference>
<dbReference type="HAMAP" id="MF_01368">
    <property type="entry name" value="Ribosomal_bL17"/>
    <property type="match status" value="1"/>
</dbReference>
<dbReference type="InterPro" id="IPR000456">
    <property type="entry name" value="Ribosomal_bL17"/>
</dbReference>
<dbReference type="InterPro" id="IPR047859">
    <property type="entry name" value="Ribosomal_bL17_CS"/>
</dbReference>
<dbReference type="InterPro" id="IPR036373">
    <property type="entry name" value="Ribosomal_bL17_sf"/>
</dbReference>
<dbReference type="NCBIfam" id="TIGR00059">
    <property type="entry name" value="L17"/>
    <property type="match status" value="1"/>
</dbReference>
<dbReference type="PANTHER" id="PTHR14413:SF16">
    <property type="entry name" value="LARGE RIBOSOMAL SUBUNIT PROTEIN BL17M"/>
    <property type="match status" value="1"/>
</dbReference>
<dbReference type="PANTHER" id="PTHR14413">
    <property type="entry name" value="RIBOSOMAL PROTEIN L17"/>
    <property type="match status" value="1"/>
</dbReference>
<dbReference type="Pfam" id="PF01196">
    <property type="entry name" value="Ribosomal_L17"/>
    <property type="match status" value="1"/>
</dbReference>
<dbReference type="SUPFAM" id="SSF64263">
    <property type="entry name" value="Prokaryotic ribosomal protein L17"/>
    <property type="match status" value="1"/>
</dbReference>
<dbReference type="PROSITE" id="PS01167">
    <property type="entry name" value="RIBOSOMAL_L17"/>
    <property type="match status" value="1"/>
</dbReference>
<accession>Q5HSJ5</accession>
<reference key="1">
    <citation type="journal article" date="2005" name="PLoS Biol.">
        <title>Major structural differences and novel potential virulence mechanisms from the genomes of multiple Campylobacter species.</title>
        <authorList>
            <person name="Fouts D.E."/>
            <person name="Mongodin E.F."/>
            <person name="Mandrell R.E."/>
            <person name="Miller W.G."/>
            <person name="Rasko D.A."/>
            <person name="Ravel J."/>
            <person name="Brinkac L.M."/>
            <person name="DeBoy R.T."/>
            <person name="Parker C.T."/>
            <person name="Daugherty S.C."/>
            <person name="Dodson R.J."/>
            <person name="Durkin A.S."/>
            <person name="Madupu R."/>
            <person name="Sullivan S.A."/>
            <person name="Shetty J.U."/>
            <person name="Ayodeji M.A."/>
            <person name="Shvartsbeyn A."/>
            <person name="Schatz M.C."/>
            <person name="Badger J.H."/>
            <person name="Fraser C.M."/>
            <person name="Nelson K.E."/>
        </authorList>
    </citation>
    <scope>NUCLEOTIDE SEQUENCE [LARGE SCALE GENOMIC DNA]</scope>
    <source>
        <strain>RM1221</strain>
    </source>
</reference>
<organism>
    <name type="scientific">Campylobacter jejuni (strain RM1221)</name>
    <dbReference type="NCBI Taxonomy" id="195099"/>
    <lineage>
        <taxon>Bacteria</taxon>
        <taxon>Pseudomonadati</taxon>
        <taxon>Campylobacterota</taxon>
        <taxon>Epsilonproteobacteria</taxon>
        <taxon>Campylobacterales</taxon>
        <taxon>Campylobacteraceae</taxon>
        <taxon>Campylobacter</taxon>
    </lineage>
</organism>
<protein>
    <recommendedName>
        <fullName evidence="1">Large ribosomal subunit protein bL17</fullName>
    </recommendedName>
    <alternativeName>
        <fullName evidence="2">50S ribosomal protein L17</fullName>
    </alternativeName>
</protein>
<proteinExistence type="inferred from homology"/>
<evidence type="ECO:0000255" key="1">
    <source>
        <dbReference type="HAMAP-Rule" id="MF_01368"/>
    </source>
</evidence>
<evidence type="ECO:0000305" key="2"/>
<sequence>MRHKHGYRKLGRTSSHRAALLKNLTIALVNSGKIETTLPKAKELRGYVERLITRARLGDFNAHRAVFASLQDKNATNKLVTEIAPKFKDRNGGYTRIIKTRIRRGDAAEMAFIEFVA</sequence>
<feature type="chain" id="PRO_0000267851" description="Large ribosomal subunit protein bL17">
    <location>
        <begin position="1"/>
        <end position="117"/>
    </location>
</feature>
<comment type="subunit">
    <text evidence="1">Part of the 50S ribosomal subunit. Contacts protein L32.</text>
</comment>
<comment type="similarity">
    <text evidence="1">Belongs to the bacterial ribosomal protein bL17 family.</text>
</comment>
<gene>
    <name evidence="1" type="primary">rplQ</name>
    <name type="ordered locus">CJE1768</name>
</gene>
<name>RL17_CAMJR</name>
<keyword id="KW-0687">Ribonucleoprotein</keyword>
<keyword id="KW-0689">Ribosomal protein</keyword>